<gene>
    <name evidence="1" type="primary">dcd</name>
    <name type="ordered locus">SDY_2197</name>
</gene>
<evidence type="ECO:0000255" key="1">
    <source>
        <dbReference type="HAMAP-Rule" id="MF_00146"/>
    </source>
</evidence>
<evidence type="ECO:0000256" key="2">
    <source>
        <dbReference type="SAM" id="MobiDB-lite"/>
    </source>
</evidence>
<proteinExistence type="inferred from homology"/>
<dbReference type="EC" id="3.5.4.13" evidence="1"/>
<dbReference type="EMBL" id="CP000034">
    <property type="protein sequence ID" value="ABB62282.1"/>
    <property type="molecule type" value="Genomic_DNA"/>
</dbReference>
<dbReference type="RefSeq" id="WP_001234777.1">
    <property type="nucleotide sequence ID" value="NC_007606.1"/>
</dbReference>
<dbReference type="RefSeq" id="YP_403773.1">
    <property type="nucleotide sequence ID" value="NC_007606.1"/>
</dbReference>
<dbReference type="SMR" id="Q32EH3"/>
<dbReference type="STRING" id="300267.SDY_2197"/>
<dbReference type="EnsemblBacteria" id="ABB62282">
    <property type="protein sequence ID" value="ABB62282"/>
    <property type="gene ID" value="SDY_2197"/>
</dbReference>
<dbReference type="KEGG" id="sdy:SDY_2197"/>
<dbReference type="PATRIC" id="fig|300267.13.peg.2657"/>
<dbReference type="HOGENOM" id="CLU_087476_2_0_6"/>
<dbReference type="UniPathway" id="UPA00610">
    <property type="reaction ID" value="UER00665"/>
</dbReference>
<dbReference type="Proteomes" id="UP000002716">
    <property type="component" value="Chromosome"/>
</dbReference>
<dbReference type="GO" id="GO:0008829">
    <property type="term" value="F:dCTP deaminase activity"/>
    <property type="evidence" value="ECO:0007669"/>
    <property type="project" value="UniProtKB-UniRule"/>
</dbReference>
<dbReference type="GO" id="GO:0000166">
    <property type="term" value="F:nucleotide binding"/>
    <property type="evidence" value="ECO:0007669"/>
    <property type="project" value="UniProtKB-KW"/>
</dbReference>
<dbReference type="GO" id="GO:0006226">
    <property type="term" value="P:dUMP biosynthetic process"/>
    <property type="evidence" value="ECO:0007669"/>
    <property type="project" value="UniProtKB-UniPathway"/>
</dbReference>
<dbReference type="GO" id="GO:0006229">
    <property type="term" value="P:dUTP biosynthetic process"/>
    <property type="evidence" value="ECO:0007669"/>
    <property type="project" value="UniProtKB-UniRule"/>
</dbReference>
<dbReference type="GO" id="GO:0015949">
    <property type="term" value="P:nucleobase-containing small molecule interconversion"/>
    <property type="evidence" value="ECO:0007669"/>
    <property type="project" value="TreeGrafter"/>
</dbReference>
<dbReference type="CDD" id="cd07557">
    <property type="entry name" value="trimeric_dUTPase"/>
    <property type="match status" value="1"/>
</dbReference>
<dbReference type="FunFam" id="2.70.40.10:FF:000003">
    <property type="entry name" value="dCTP deaminase"/>
    <property type="match status" value="1"/>
</dbReference>
<dbReference type="Gene3D" id="2.70.40.10">
    <property type="match status" value="1"/>
</dbReference>
<dbReference type="HAMAP" id="MF_00146">
    <property type="entry name" value="dCTP_deaminase"/>
    <property type="match status" value="1"/>
</dbReference>
<dbReference type="InterPro" id="IPR011962">
    <property type="entry name" value="dCTP_deaminase"/>
</dbReference>
<dbReference type="InterPro" id="IPR036157">
    <property type="entry name" value="dUTPase-like_sf"/>
</dbReference>
<dbReference type="InterPro" id="IPR033704">
    <property type="entry name" value="dUTPase_trimeric"/>
</dbReference>
<dbReference type="NCBIfam" id="TIGR02274">
    <property type="entry name" value="dCTP_deam"/>
    <property type="match status" value="1"/>
</dbReference>
<dbReference type="PANTHER" id="PTHR42680">
    <property type="entry name" value="DCTP DEAMINASE"/>
    <property type="match status" value="1"/>
</dbReference>
<dbReference type="PANTHER" id="PTHR42680:SF3">
    <property type="entry name" value="DCTP DEAMINASE"/>
    <property type="match status" value="1"/>
</dbReference>
<dbReference type="Pfam" id="PF22769">
    <property type="entry name" value="DCD"/>
    <property type="match status" value="1"/>
</dbReference>
<dbReference type="SUPFAM" id="SSF51283">
    <property type="entry name" value="dUTPase-like"/>
    <property type="match status" value="1"/>
</dbReference>
<organism>
    <name type="scientific">Shigella dysenteriae serotype 1 (strain Sd197)</name>
    <dbReference type="NCBI Taxonomy" id="300267"/>
    <lineage>
        <taxon>Bacteria</taxon>
        <taxon>Pseudomonadati</taxon>
        <taxon>Pseudomonadota</taxon>
        <taxon>Gammaproteobacteria</taxon>
        <taxon>Enterobacterales</taxon>
        <taxon>Enterobacteriaceae</taxon>
        <taxon>Shigella</taxon>
    </lineage>
</organism>
<accession>Q32EH3</accession>
<name>DCD_SHIDS</name>
<protein>
    <recommendedName>
        <fullName evidence="1">dCTP deaminase</fullName>
        <ecNumber evidence="1">3.5.4.13</ecNumber>
    </recommendedName>
    <alternativeName>
        <fullName evidence="1">Deoxycytidine triphosphate deaminase</fullName>
    </alternativeName>
</protein>
<reference key="1">
    <citation type="journal article" date="2005" name="Nucleic Acids Res.">
        <title>Genome dynamics and diversity of Shigella species, the etiologic agents of bacillary dysentery.</title>
        <authorList>
            <person name="Yang F."/>
            <person name="Yang J."/>
            <person name="Zhang X."/>
            <person name="Chen L."/>
            <person name="Jiang Y."/>
            <person name="Yan Y."/>
            <person name="Tang X."/>
            <person name="Wang J."/>
            <person name="Xiong Z."/>
            <person name="Dong J."/>
            <person name="Xue Y."/>
            <person name="Zhu Y."/>
            <person name="Xu X."/>
            <person name="Sun L."/>
            <person name="Chen S."/>
            <person name="Nie H."/>
            <person name="Peng J."/>
            <person name="Xu J."/>
            <person name="Wang Y."/>
            <person name="Yuan Z."/>
            <person name="Wen Y."/>
            <person name="Yao Z."/>
            <person name="Shen Y."/>
            <person name="Qiang B."/>
            <person name="Hou Y."/>
            <person name="Yu J."/>
            <person name="Jin Q."/>
        </authorList>
    </citation>
    <scope>NUCLEOTIDE SEQUENCE [LARGE SCALE GENOMIC DNA]</scope>
    <source>
        <strain>Sd197</strain>
    </source>
</reference>
<sequence>MRLCDRDIEAWLDEGRLSINPRPPVERINGATVDVRLGNKFRTFRGHTAAFIDLSGPKDEVSAALDRVMSDEIVLDESEAFYLHPGELALAVTLESVTLPADLVGWLDGRSSLARLGLMVHVTAHRIDPGWSGCIVLEFYNSGKLPLALRPGMLIGALSFEPLSGPAARPYNRREDAKYRNQQGAVASRIDKD</sequence>
<comment type="function">
    <text evidence="1">Catalyzes the deamination of dCTP to dUTP.</text>
</comment>
<comment type="catalytic activity">
    <reaction evidence="1">
        <text>dCTP + H2O + H(+) = dUTP + NH4(+)</text>
        <dbReference type="Rhea" id="RHEA:22680"/>
        <dbReference type="ChEBI" id="CHEBI:15377"/>
        <dbReference type="ChEBI" id="CHEBI:15378"/>
        <dbReference type="ChEBI" id="CHEBI:28938"/>
        <dbReference type="ChEBI" id="CHEBI:61481"/>
        <dbReference type="ChEBI" id="CHEBI:61555"/>
        <dbReference type="EC" id="3.5.4.13"/>
    </reaction>
</comment>
<comment type="pathway">
    <text evidence="1">Pyrimidine metabolism; dUMP biosynthesis; dUMP from dCTP (dUTP route): step 1/2.</text>
</comment>
<comment type="subunit">
    <text evidence="1">Homotrimer.</text>
</comment>
<comment type="similarity">
    <text evidence="1">Belongs to the dCTP deaminase family.</text>
</comment>
<feature type="chain" id="PRO_1000009817" description="dCTP deaminase">
    <location>
        <begin position="1"/>
        <end position="193"/>
    </location>
</feature>
<feature type="region of interest" description="Disordered" evidence="2">
    <location>
        <begin position="169"/>
        <end position="193"/>
    </location>
</feature>
<feature type="active site" description="Proton donor/acceptor" evidence="1">
    <location>
        <position position="138"/>
    </location>
</feature>
<feature type="binding site" evidence="1">
    <location>
        <begin position="110"/>
        <end position="115"/>
    </location>
    <ligand>
        <name>dCTP</name>
        <dbReference type="ChEBI" id="CHEBI:61481"/>
    </ligand>
</feature>
<feature type="binding site" evidence="1">
    <location>
        <position position="128"/>
    </location>
    <ligand>
        <name>dCTP</name>
        <dbReference type="ChEBI" id="CHEBI:61481"/>
    </ligand>
</feature>
<feature type="binding site" evidence="1">
    <location>
        <begin position="136"/>
        <end position="138"/>
    </location>
    <ligand>
        <name>dCTP</name>
        <dbReference type="ChEBI" id="CHEBI:61481"/>
    </ligand>
</feature>
<feature type="binding site" evidence="1">
    <location>
        <position position="171"/>
    </location>
    <ligand>
        <name>dCTP</name>
        <dbReference type="ChEBI" id="CHEBI:61481"/>
    </ligand>
</feature>
<feature type="binding site" evidence="1">
    <location>
        <position position="178"/>
    </location>
    <ligand>
        <name>dCTP</name>
        <dbReference type="ChEBI" id="CHEBI:61481"/>
    </ligand>
</feature>
<feature type="binding site" evidence="1">
    <location>
        <position position="182"/>
    </location>
    <ligand>
        <name>dCTP</name>
        <dbReference type="ChEBI" id="CHEBI:61481"/>
    </ligand>
</feature>
<keyword id="KW-0378">Hydrolase</keyword>
<keyword id="KW-0546">Nucleotide metabolism</keyword>
<keyword id="KW-0547">Nucleotide-binding</keyword>
<keyword id="KW-1185">Reference proteome</keyword>